<evidence type="ECO:0000250" key="1">
    <source>
        <dbReference type="UniProtKB" id="P17367"/>
    </source>
</evidence>
<evidence type="ECO:0000305" key="2"/>
<comment type="induction">
    <text evidence="1">Expressed in the early phase of the viral replicative cycle.</text>
</comment>
<comment type="similarity">
    <text evidence="2">Belongs to the orthopoxvirus OPG030 family.</text>
</comment>
<gene>
    <name type="primary">OPG30</name>
    <name type="synonym">C5L</name>
</gene>
<protein>
    <recommendedName>
        <fullName>Protein OPG030</fullName>
    </recommendedName>
</protein>
<dbReference type="EMBL" id="M35027">
    <property type="protein sequence ID" value="AAA47995.1"/>
    <property type="molecule type" value="Genomic_DNA"/>
</dbReference>
<dbReference type="PIR" id="I42503">
    <property type="entry name" value="I42503"/>
</dbReference>
<dbReference type="SMR" id="P21039"/>
<dbReference type="Proteomes" id="UP000008269">
    <property type="component" value="Segment"/>
</dbReference>
<dbReference type="Gene3D" id="1.25.40.420">
    <property type="match status" value="1"/>
</dbReference>
<dbReference type="InterPro" id="IPR011705">
    <property type="entry name" value="BACK"/>
</dbReference>
<dbReference type="InterPro" id="IPR009177">
    <property type="entry name" value="Orthopox_C5"/>
</dbReference>
<dbReference type="PANTHER" id="PTHR45632:SF5">
    <property type="entry name" value="KELCH-LIKE PROTEIN 22"/>
    <property type="match status" value="1"/>
</dbReference>
<dbReference type="PANTHER" id="PTHR45632">
    <property type="entry name" value="LD33804P"/>
    <property type="match status" value="1"/>
</dbReference>
<dbReference type="Pfam" id="PF07707">
    <property type="entry name" value="BACK"/>
    <property type="match status" value="1"/>
</dbReference>
<dbReference type="PIRSF" id="PIRSF003781">
    <property type="entry name" value="VAC_C5L"/>
    <property type="match status" value="1"/>
</dbReference>
<dbReference type="SMART" id="SM00875">
    <property type="entry name" value="BACK"/>
    <property type="match status" value="1"/>
</dbReference>
<sequence>MAYMNRSDLDKLKHENIFSGNIIEDAKEFVFGSRKIYTDSVDDLIELYSLAKYLNNENLKDVVIERMDYVCKYIGKDNWSTIYSFYKENGLRNSFLRQYINNNIEEICNTDQFLKLDVDSVCDILDNDEIVVTREYTILNMVLRWLENKRVNIDDFTKVMFVIRFKFITYSELTNAIEKIAPEYRQCLQDLYHMKITRPRHFDN</sequence>
<feature type="chain" id="PRO_0000099380" description="Protein OPG030">
    <location>
        <begin position="1"/>
        <end position="204"/>
    </location>
</feature>
<feature type="domain" description="BACK">
    <location>
        <begin position="95"/>
        <end position="177"/>
    </location>
</feature>
<reference key="1">
    <citation type="journal article" date="1990" name="Virology">
        <title>The complete DNA sequence of vaccinia virus.</title>
        <authorList>
            <person name="Goebel S.J."/>
            <person name="Johnson G.P."/>
            <person name="Perkus M.E."/>
            <person name="Davis S.W."/>
            <person name="Winslow J.P."/>
            <person name="Paoletti E."/>
        </authorList>
    </citation>
    <scope>NUCLEOTIDE SEQUENCE [LARGE SCALE GENOMIC DNA]</scope>
</reference>
<reference key="2">
    <citation type="journal article" date="1990" name="Virology">
        <title>Appendix to 'The complete DNA sequence of vaccinia virus'.</title>
        <authorList>
            <person name="Goebel S.J."/>
            <person name="Johnson G.P."/>
            <person name="Perkus M.E."/>
            <person name="Davis S.W."/>
            <person name="Winslow J.P."/>
            <person name="Paoletti E."/>
        </authorList>
    </citation>
    <scope>NUCLEOTIDE SEQUENCE [LARGE SCALE GENOMIC DNA]</scope>
</reference>
<name>PG030_VACCC</name>
<keyword id="KW-0244">Early protein</keyword>
<keyword id="KW-1185">Reference proteome</keyword>
<organismHost>
    <name type="scientific">Homo sapiens</name>
    <name type="common">Human</name>
    <dbReference type="NCBI Taxonomy" id="9606"/>
</organismHost>
<organism>
    <name type="scientific">Vaccinia virus (strain Copenhagen)</name>
    <name type="common">VACV</name>
    <dbReference type="NCBI Taxonomy" id="10249"/>
    <lineage>
        <taxon>Viruses</taxon>
        <taxon>Varidnaviria</taxon>
        <taxon>Bamfordvirae</taxon>
        <taxon>Nucleocytoviricota</taxon>
        <taxon>Pokkesviricetes</taxon>
        <taxon>Chitovirales</taxon>
        <taxon>Poxviridae</taxon>
        <taxon>Chordopoxvirinae</taxon>
        <taxon>Orthopoxvirus</taxon>
        <taxon>Vaccinia virus</taxon>
    </lineage>
</organism>
<accession>P21039</accession>
<proteinExistence type="inferred from homology"/>